<sequence length="187" mass="20643">MASPNRLIVAVTGLPGSGKSVVARIVAEELGLEVKVMGDVVREETVRRGLEPTPENVERVARMLREELGRAAVAKLLAERLEPGRSYVLDGLRSVEEAEVLARAGWRVFIIGVYAPRKQRLERLMRRRRSGETLWEVLELRDASNIELGVGEALALSDYLIVNTGSLEDLEFEARRAARVAICGGDP</sequence>
<dbReference type="EMBL" id="BA000002">
    <property type="protein sequence ID" value="BAA80756.2"/>
    <property type="molecule type" value="Genomic_DNA"/>
</dbReference>
<dbReference type="PIR" id="G72558">
    <property type="entry name" value="G72558"/>
</dbReference>
<dbReference type="RefSeq" id="WP_010866574.1">
    <property type="nucleotide sequence ID" value="NC_000854.2"/>
</dbReference>
<dbReference type="SMR" id="Q9YB42"/>
<dbReference type="STRING" id="272557.APE_1753.1"/>
<dbReference type="EnsemblBacteria" id="BAA80756">
    <property type="protein sequence ID" value="BAA80756"/>
    <property type="gene ID" value="APE_1753.1"/>
</dbReference>
<dbReference type="GeneID" id="1446219"/>
<dbReference type="KEGG" id="ape:APE_1753.1"/>
<dbReference type="PATRIC" id="fig|272557.25.peg.1179"/>
<dbReference type="eggNOG" id="arCOG01045">
    <property type="taxonomic scope" value="Archaea"/>
</dbReference>
<dbReference type="Proteomes" id="UP000002518">
    <property type="component" value="Chromosome"/>
</dbReference>
<dbReference type="GO" id="GO:0005524">
    <property type="term" value="F:ATP binding"/>
    <property type="evidence" value="ECO:0007669"/>
    <property type="project" value="UniProtKB-UniRule"/>
</dbReference>
<dbReference type="Gene3D" id="3.40.50.300">
    <property type="entry name" value="P-loop containing nucleotide triphosphate hydrolases"/>
    <property type="match status" value="1"/>
</dbReference>
<dbReference type="HAMAP" id="MF_01111">
    <property type="entry name" value="UPF0200"/>
    <property type="match status" value="1"/>
</dbReference>
<dbReference type="InterPro" id="IPR022970">
    <property type="entry name" value="NTP_hydrolase-rel"/>
</dbReference>
<dbReference type="InterPro" id="IPR027417">
    <property type="entry name" value="P-loop_NTPase"/>
</dbReference>
<dbReference type="PANTHER" id="PTHR41930:SF1">
    <property type="entry name" value="DEPHOSPHO-COA KINASE"/>
    <property type="match status" value="1"/>
</dbReference>
<dbReference type="PANTHER" id="PTHR41930">
    <property type="entry name" value="UPF0200 PROTEIN MJ1399"/>
    <property type="match status" value="1"/>
</dbReference>
<dbReference type="Pfam" id="PF13207">
    <property type="entry name" value="AAA_17"/>
    <property type="match status" value="1"/>
</dbReference>
<dbReference type="SUPFAM" id="SSF52540">
    <property type="entry name" value="P-loop containing nucleoside triphosphate hydrolases"/>
    <property type="match status" value="1"/>
</dbReference>
<evidence type="ECO:0000255" key="1">
    <source>
        <dbReference type="HAMAP-Rule" id="MF_01111"/>
    </source>
</evidence>
<proteinExistence type="inferred from homology"/>
<organism>
    <name type="scientific">Aeropyrum pernix (strain ATCC 700893 / DSM 11879 / JCM 9820 / NBRC 100138 / K1)</name>
    <dbReference type="NCBI Taxonomy" id="272557"/>
    <lineage>
        <taxon>Archaea</taxon>
        <taxon>Thermoproteota</taxon>
        <taxon>Thermoprotei</taxon>
        <taxon>Desulfurococcales</taxon>
        <taxon>Desulfurococcaceae</taxon>
        <taxon>Aeropyrum</taxon>
    </lineage>
</organism>
<name>Y1753_AERPE</name>
<protein>
    <recommendedName>
        <fullName evidence="1">UPF0200 protein APE_1753.1</fullName>
    </recommendedName>
</protein>
<reference key="1">
    <citation type="journal article" date="1999" name="DNA Res.">
        <title>Complete genome sequence of an aerobic hyper-thermophilic crenarchaeon, Aeropyrum pernix K1.</title>
        <authorList>
            <person name="Kawarabayasi Y."/>
            <person name="Hino Y."/>
            <person name="Horikawa H."/>
            <person name="Yamazaki S."/>
            <person name="Haikawa Y."/>
            <person name="Jin-no K."/>
            <person name="Takahashi M."/>
            <person name="Sekine M."/>
            <person name="Baba S."/>
            <person name="Ankai A."/>
            <person name="Kosugi H."/>
            <person name="Hosoyama A."/>
            <person name="Fukui S."/>
            <person name="Nagai Y."/>
            <person name="Nishijima K."/>
            <person name="Nakazawa H."/>
            <person name="Takamiya M."/>
            <person name="Masuda S."/>
            <person name="Funahashi T."/>
            <person name="Tanaka T."/>
            <person name="Kudoh Y."/>
            <person name="Yamazaki J."/>
            <person name="Kushida N."/>
            <person name="Oguchi A."/>
            <person name="Aoki K."/>
            <person name="Kubota K."/>
            <person name="Nakamura Y."/>
            <person name="Nomura N."/>
            <person name="Sako Y."/>
            <person name="Kikuchi H."/>
        </authorList>
    </citation>
    <scope>NUCLEOTIDE SEQUENCE [LARGE SCALE GENOMIC DNA]</scope>
    <source>
        <strain>ATCC 700893 / DSM 11879 / JCM 9820 / NBRC 100138 / K1</strain>
    </source>
</reference>
<comment type="similarity">
    <text evidence="1">Belongs to the UPF0200 family.</text>
</comment>
<gene>
    <name type="ordered locus">APE_1753.1</name>
</gene>
<feature type="chain" id="PRO_0000094521" description="UPF0200 protein APE_1753.1">
    <location>
        <begin position="1"/>
        <end position="187"/>
    </location>
</feature>
<feature type="binding site" evidence="1">
    <location>
        <begin position="13"/>
        <end position="20"/>
    </location>
    <ligand>
        <name>ATP</name>
        <dbReference type="ChEBI" id="CHEBI:30616"/>
    </ligand>
</feature>
<accession>Q9YB42</accession>
<keyword id="KW-0067">ATP-binding</keyword>
<keyword id="KW-0547">Nucleotide-binding</keyword>
<keyword id="KW-1185">Reference proteome</keyword>